<evidence type="ECO:0000255" key="1"/>
<evidence type="ECO:0000255" key="2">
    <source>
        <dbReference type="PROSITE-ProRule" id="PRU00477"/>
    </source>
</evidence>
<evidence type="ECO:0000255" key="3">
    <source>
        <dbReference type="PROSITE-ProRule" id="PRU01232"/>
    </source>
</evidence>
<evidence type="ECO:0000256" key="4">
    <source>
        <dbReference type="SAM" id="MobiDB-lite"/>
    </source>
</evidence>
<evidence type="ECO:0000269" key="5">
    <source>
    </source>
</evidence>
<evidence type="ECO:0000269" key="6">
    <source>
    </source>
</evidence>
<evidence type="ECO:0000269" key="7">
    <source>
    </source>
</evidence>
<evidence type="ECO:0000269" key="8">
    <source>
    </source>
</evidence>
<evidence type="ECO:0000269" key="9">
    <source>
    </source>
</evidence>
<evidence type="ECO:0000269" key="10">
    <source>
    </source>
</evidence>
<evidence type="ECO:0000303" key="11">
    <source>
    </source>
</evidence>
<evidence type="ECO:0000305" key="12">
    <source>
    </source>
</evidence>
<evidence type="ECO:0000305" key="13">
    <source>
    </source>
</evidence>
<evidence type="ECO:0000305" key="14">
    <source>
    </source>
</evidence>
<reference key="1">
    <citation type="journal article" date="2002" name="Nature">
        <title>Complete genome sequence of the model actinomycete Streptomyces coelicolor A3(2).</title>
        <authorList>
            <person name="Bentley S.D."/>
            <person name="Chater K.F."/>
            <person name="Cerdeno-Tarraga A.-M."/>
            <person name="Challis G.L."/>
            <person name="Thomson N.R."/>
            <person name="James K.D."/>
            <person name="Harris D.E."/>
            <person name="Quail M.A."/>
            <person name="Kieser H."/>
            <person name="Harper D."/>
            <person name="Bateman A."/>
            <person name="Brown S."/>
            <person name="Chandra G."/>
            <person name="Chen C.W."/>
            <person name="Collins M."/>
            <person name="Cronin A."/>
            <person name="Fraser A."/>
            <person name="Goble A."/>
            <person name="Hidalgo J."/>
            <person name="Hornsby T."/>
            <person name="Howarth S."/>
            <person name="Huang C.-H."/>
            <person name="Kieser T."/>
            <person name="Larke L."/>
            <person name="Murphy L.D."/>
            <person name="Oliver K."/>
            <person name="O'Neil S."/>
            <person name="Rabbinowitsch E."/>
            <person name="Rajandream M.A."/>
            <person name="Rutherford K.M."/>
            <person name="Rutter S."/>
            <person name="Seeger K."/>
            <person name="Saunders D."/>
            <person name="Sharp S."/>
            <person name="Squares R."/>
            <person name="Squares S."/>
            <person name="Taylor K."/>
            <person name="Warren T."/>
            <person name="Wietzorrek A."/>
            <person name="Woodward J.R."/>
            <person name="Barrell B.G."/>
            <person name="Parkhill J."/>
            <person name="Hopwood D.A."/>
        </authorList>
    </citation>
    <scope>NUCLEOTIDE SEQUENCE [LARGE SCALE GENOMIC DNA]</scope>
    <source>
        <strain>ATCC BAA-471 / A3(2) / M145</strain>
    </source>
</reference>
<reference key="2">
    <citation type="journal article" date="2003" name="Genes Dev.">
        <title>A novel class of secreted hydrophobic proteins is involved in aerial hyphae formation in Streptomyces coelicolor by forming amyloid-like fibrils.</title>
        <authorList>
            <person name="Claessen D."/>
            <person name="Rink R."/>
            <person name="de Jong W."/>
            <person name="Siebring J."/>
            <person name="de Vreugd P."/>
            <person name="Boersma F.G."/>
            <person name="Dijkhuizen L."/>
            <person name="Wosten H.A."/>
        </authorList>
    </citation>
    <scope>FUNCTION</scope>
    <scope>INDUCTION</scope>
    <scope>DISRUPTION PHENOTYPE</scope>
    <source>
        <strain>ATCC BAA-471 / A3(2) / M145</strain>
    </source>
</reference>
<reference key="3">
    <citation type="journal article" date="2003" name="Genes Dev.">
        <title>The chaplins: a family of hydrophobic cell-surface proteins involved in aerial mycelium formation in Streptomyces coelicolor.</title>
        <authorList>
            <person name="Elliot M.A."/>
            <person name="Karoonuthaisiri N."/>
            <person name="Huang J."/>
            <person name="Bibb M.J."/>
            <person name="Cohen S.N."/>
            <person name="Kao C.M."/>
            <person name="Buttner M.J."/>
        </authorList>
    </citation>
    <scope>FUNCTION</scope>
    <scope>INDUCTION</scope>
    <scope>DISRUPTION PHENOTYPE</scope>
    <source>
        <strain>A3(2) / M600</strain>
    </source>
</reference>
<reference key="4">
    <citation type="journal article" date="2004" name="Mol. Microbiol.">
        <title>The formation of the rodlet layer of streptomycetes is the result of the interplay between rodlins and chaplins.</title>
        <authorList>
            <person name="Claessen D."/>
            <person name="Stokroos I."/>
            <person name="Deelstra H.J."/>
            <person name="Penninga N.A."/>
            <person name="Bormann C."/>
            <person name="Salas J.A."/>
            <person name="Dijkhuizen L."/>
            <person name="Woesten H.A."/>
        </authorList>
    </citation>
    <scope>FUNCTION</scope>
    <scope>DISRUPTION PHENOTYPE</scope>
    <source>
        <strain>ATCC BAA-471 / A3(2) / M145</strain>
    </source>
</reference>
<reference key="5">
    <citation type="journal article" date="2007" name="Mol. Microbiol.">
        <title>SapB and the chaplins: connections between morphogenetic proteins in Streptomyces coelicolor.</title>
        <authorList>
            <person name="Capstick D.S."/>
            <person name="Willey J.M."/>
            <person name="Buttner M.J."/>
            <person name="Elliot M.A."/>
        </authorList>
    </citation>
    <scope>FUNCTION</scope>
    <scope>DISRUPTION PHENOTYPE</scope>
    <source>
        <strain>A3(2) / M600</strain>
    </source>
</reference>
<reference key="6">
    <citation type="journal article" date="2009" name="Mol. Microbiol.">
        <title>Attachment of Streptomyces coelicolor is mediated by amyloidal fimbriae that are anchored to the cell surface via cellulose.</title>
        <authorList>
            <person name="de Jong W."/>
            <person name="Woesten H.A."/>
            <person name="Dijkhuizen L."/>
            <person name="Claessen D."/>
        </authorList>
    </citation>
    <scope>FUNCTION IN GROWTH SUBSTRATE ATTACHMENT</scope>
    <scope>DISRUPTION PHENOTYPE</scope>
    <source>
        <strain>ATCC BAA-471 / A3(2) / M145</strain>
    </source>
</reference>
<reference key="7">
    <citation type="journal article" date="2012" name="Mol. Microbiol.">
        <title>Aerial development in Streptomyces coelicolor requires sortase activity.</title>
        <authorList>
            <person name="Duong A."/>
            <person name="Capstick D.S."/>
            <person name="Di Berardo C."/>
            <person name="Findlay K.C."/>
            <person name="Hesketh A."/>
            <person name="Hong H.J."/>
            <person name="Elliot M.A."/>
        </authorList>
    </citation>
    <scope>FUNCTION</scope>
    <scope>SUBCELLULAR LOCATION</scope>
    <scope>DISRUPTION PHENOTYPE</scope>
    <source>
        <strain>A3(2) / M600</strain>
    </source>
</reference>
<protein>
    <recommendedName>
        <fullName evidence="11">Chaplin-B</fullName>
    </recommendedName>
</protein>
<gene>
    <name evidence="11" type="primary">chpB</name>
    <name type="ordered locus">SCO7257</name>
</gene>
<name>CHPB_STRCO</name>
<organism>
    <name type="scientific">Streptomyces coelicolor (strain ATCC BAA-471 / A3(2) / M145)</name>
    <dbReference type="NCBI Taxonomy" id="100226"/>
    <lineage>
        <taxon>Bacteria</taxon>
        <taxon>Bacillati</taxon>
        <taxon>Actinomycetota</taxon>
        <taxon>Actinomycetes</taxon>
        <taxon>Kitasatosporales</taxon>
        <taxon>Streptomycetaceae</taxon>
        <taxon>Streptomyces</taxon>
        <taxon>Streptomyces albidoflavus group</taxon>
    </lineage>
</organism>
<dbReference type="EMBL" id="AL939131">
    <property type="protein sequence ID" value="CAB42960.1"/>
    <property type="molecule type" value="Genomic_DNA"/>
</dbReference>
<dbReference type="PIR" id="T35351">
    <property type="entry name" value="T35351"/>
</dbReference>
<dbReference type="RefSeq" id="NP_631313.1">
    <property type="nucleotide sequence ID" value="NC_003888.3"/>
</dbReference>
<dbReference type="RefSeq" id="WP_011031547.1">
    <property type="nucleotide sequence ID" value="NZ_VNID01000019.1"/>
</dbReference>
<dbReference type="STRING" id="100226.gene:17764917"/>
<dbReference type="PaxDb" id="100226-SCO7257"/>
<dbReference type="KEGG" id="sco:SCO7257"/>
<dbReference type="PATRIC" id="fig|100226.15.peg.7359"/>
<dbReference type="eggNOG" id="ENOG5034C0V">
    <property type="taxonomic scope" value="Bacteria"/>
</dbReference>
<dbReference type="HOGENOM" id="CLU_070271_0_0_11"/>
<dbReference type="InParanoid" id="Q9X7U2"/>
<dbReference type="OrthoDB" id="3544424at2"/>
<dbReference type="Proteomes" id="UP000001973">
    <property type="component" value="Chromosome"/>
</dbReference>
<dbReference type="GO" id="GO:0005576">
    <property type="term" value="C:extracellular region"/>
    <property type="evidence" value="ECO:0007669"/>
    <property type="project" value="UniProtKB-KW"/>
</dbReference>
<dbReference type="GO" id="GO:0007155">
    <property type="term" value="P:cell adhesion"/>
    <property type="evidence" value="ECO:0007669"/>
    <property type="project" value="UniProtKB-KW"/>
</dbReference>
<dbReference type="InterPro" id="IPR005528">
    <property type="entry name" value="ChpA-H"/>
</dbReference>
<dbReference type="InterPro" id="IPR019931">
    <property type="entry name" value="LPXTG_anchor"/>
</dbReference>
<dbReference type="NCBIfam" id="TIGR01167">
    <property type="entry name" value="LPXTG_anchor"/>
    <property type="match status" value="1"/>
</dbReference>
<dbReference type="Pfam" id="PF03777">
    <property type="entry name" value="ChpA-C"/>
    <property type="match status" value="2"/>
</dbReference>
<dbReference type="PROSITE" id="PS51884">
    <property type="entry name" value="CHAPLIN"/>
    <property type="match status" value="2"/>
</dbReference>
<dbReference type="PROSITE" id="PS50847">
    <property type="entry name" value="GRAM_POS_ANCHORING"/>
    <property type="match status" value="1"/>
</dbReference>
<proteinExistence type="evidence at protein level"/>
<feature type="signal peptide" evidence="1">
    <location>
        <begin position="1"/>
        <end position="26"/>
    </location>
</feature>
<feature type="chain" id="PRO_5004336275" description="Chaplin-B" evidence="1">
    <location>
        <begin position="27"/>
        <end position="237"/>
    </location>
</feature>
<feature type="propeptide" id="PRO_0000445189" description="Removed by sortase" evidence="2">
    <location>
        <begin position="206"/>
        <end position="237"/>
    </location>
</feature>
<feature type="domain" description="Chaplin 1" evidence="3">
    <location>
        <begin position="42"/>
        <end position="82"/>
    </location>
</feature>
<feature type="domain" description="Chaplin 2" evidence="3">
    <location>
        <begin position="120"/>
        <end position="160"/>
    </location>
</feature>
<feature type="region of interest" description="Disordered" evidence="4">
    <location>
        <begin position="81"/>
        <end position="127"/>
    </location>
</feature>
<feature type="region of interest" description="Disordered" evidence="4">
    <location>
        <begin position="148"/>
        <end position="216"/>
    </location>
</feature>
<feature type="short sequence motif" description="LPXTG sorting signal" evidence="2">
    <location>
        <begin position="202"/>
        <end position="206"/>
    </location>
</feature>
<feature type="compositionally biased region" description="Low complexity" evidence="4">
    <location>
        <begin position="101"/>
        <end position="115"/>
    </location>
</feature>
<feature type="compositionally biased region" description="Pro residues" evidence="4">
    <location>
        <begin position="169"/>
        <end position="178"/>
    </location>
</feature>
<feature type="modified residue" description="Pentaglycyl murein peptidoglycan amidated threonine" evidence="2">
    <location>
        <position position="205"/>
    </location>
</feature>
<accession>Q9X7U2</accession>
<sequence length="237" mass="22741">MRRVTRNGVLAVAASGALAVTMPAYAAFASDGAGAEGSAAGSPGLISGNTVQLPVDVPVDVCGNTVNVVGLLNPAAGNGCADSGEPGASYQAAGASGGTSGSATEATSGGAAAEGSGKDSPGVLSGNGVQLPVHLPVNVSGNSVNVVGIGNPAVGNESTNDSGDHPEPVRPPAEPEPSAPEEERAGPGPSAHAAPPREEVSLAHTGTDRTLPTLAGGAALVLGGTVLYRRFRPGSGD</sequence>
<comment type="function">
    <text evidence="5 6 7 8 9 10">One of 8 partially redundant surface-active proteins required for efficient formation of aerial mycelium; the short chaplins assemble into a hydrophobic, amyloidal fibrillar surface layer that envelopes and protects aerial hyphae and spores, presumably anchored to the long chaplins (PubMed:12832396, PubMed:12832397, PubMed:15228525, PubMed:17462011). Chaplins have an overlapping function with the surface-active SapB peptide; chaplins are essential on minimal medium while on rich medium both chaplins and SapB are required for efficient aerial hyphae formation (PubMed:17462011). The long chaplins (ChpA, ChpB, ChpC) are not absolutely necessary for short chaplin localization or rodlet formation, but probably play a role in initiating aerial hyphae development (PubMed:22296345). Chaplins are also involved in cell attachment to a hydrophobic surface (PubMed:19682261).</text>
</comment>
<comment type="subcellular location">
    <subcellularLocation>
        <location evidence="2 13 14">Secreted</location>
        <location evidence="2 13 14">Cell wall</location>
        <topology evidence="2 13 14">Peptidoglycan-anchor</topology>
    </subcellularLocation>
    <text evidence="14">Anchored to the cell wall by at least one of sortases SrtE1 and SrtE2.</text>
</comment>
<comment type="induction">
    <text evidence="6 12">Transcribed during aerial hyphae formation on minimal medium, about 10- to 25-fold lower expression than the short chaplins. Weak expression in aerial hyphae (at protein level) (Probable). Very low expression on rich medium, unaffected by ECF sigma factor BldN (PubMed:12832397).</text>
</comment>
<comment type="disruption phenotype">
    <text evidence="5 6 7 8 9 10">A single chpB disruption has no phenotype; a quadruple chpA-chpC-chpD-chpH knockout has delayed aerial hyphae formation and sporulation. A quintuple chpA-chpB-chpC-chpD-chpH knockout has a longer delay in aerial hyphae formation and an almost complete lack of sporulation. The quintuple knockout still expresses ChpE, ChpF and ChpG (PubMed:12832397). Quintuple knockout chpA-chpB-chpC-chpD-chpH has strongly delayed aerial hyphae formation, makes many fewer aerial hyphae but no effect on viability of the spores produced. Further deletion of chpE leads to more severe effects, and on rich media few aerial hyphae are produced after prolonged growth. Those few hyphae do differentiate into spores and have a rodlet layer (PubMed:12832396). Deletion of all 8 chaplin genes on minimal medium leads to severely disrupted aerial hyphae that collapse on the colony surface and are not hydrophobic. A few spore chains can still be made, but they have neither rodlets or amyloid-like fibers. rdlA and rdlB mRNA are down-regulated (PubMed:15228525, PubMed:17462011). Deletion of all 8 chaplin genes on rich medium leads to a reduced abundance of aerial hyphae without rodlets and occasional spore chains on surface hyphae. A complete chaplin-negative plus ram-negative strain (deletion of ramR or the ramC-ramS-ramA-ramB operon) leads to the complete loss of robust aerial hyphae (PubMed:17462011). Deletion of the 3 long chaplins (ChpA, ChpB, ChpC) results in a 24 hour delay in aerial hyphae formation, while rodlets are about 1.5-fold longer than wild-type (PubMed:22296345). Deletion of all 8 chaplin genes significantly reduces cellular attachment to a hydrophobic substrate; thin fibrils instead of fimbrae are detected. The long chaplins (ChpA, ChpB and ChpC, as seen by near wild-type attachment of the hextuple chpA-chpB-chpC-chpD-chpE-chpH knockout) are not essential but may contribute to cellular attachment (PubMed:19682261).</text>
</comment>
<comment type="similarity">
    <text evidence="13">Belongs to the chaplin family. Long chaplin subfamily.</text>
</comment>
<keyword id="KW-0034">Amyloid</keyword>
<keyword id="KW-0130">Cell adhesion</keyword>
<keyword id="KW-0134">Cell wall</keyword>
<keyword id="KW-0572">Peptidoglycan-anchor</keyword>
<keyword id="KW-1185">Reference proteome</keyword>
<keyword id="KW-0677">Repeat</keyword>
<keyword id="KW-0964">Secreted</keyword>
<keyword id="KW-0732">Signal</keyword>